<name>RB11A_RABIT</name>
<reference key="1">
    <citation type="journal article" date="1994" name="Am. J. Physiol.">
        <title>Enrichment of rab11, a small GTP-binding protein, in gastric parietal cells.</title>
        <authorList>
            <person name="Goldenring J.R."/>
            <person name="Soroka C.J."/>
            <person name="Shen K.R."/>
            <person name="Tang L.H."/>
            <person name="Rodriguez W."/>
            <person name="Vaughan H.D."/>
            <person name="Stoch S.A."/>
            <person name="Modlin I.M."/>
        </authorList>
    </citation>
    <scope>NUCLEOTIDE SEQUENCE [MRNA]</scope>
    <scope>TISSUE SPECIFICITY</scope>
    <source>
        <strain>New Zealand white</strain>
        <tissue>Gastric fundus</tissue>
    </source>
</reference>
<reference key="2">
    <citation type="journal article" date="1999" name="Mol. Biol. Cell">
        <title>Association of Rab25 and Rab11a with the apical recycling system of polarized Madin-Darby canine kidney cells.</title>
        <authorList>
            <person name="Casanova J.E."/>
            <person name="Wang X."/>
            <person name="Kumar R."/>
            <person name="Bhartur S.G."/>
            <person name="Navarre J."/>
            <person name="Woodrum J.E."/>
            <person name="Altschuler Y."/>
            <person name="Ray G.S."/>
            <person name="Goldenring J.R."/>
        </authorList>
    </citation>
    <scope>FUNCTION</scope>
    <scope>CATALYTIC ACTIVITY</scope>
</reference>
<comment type="function">
    <text evidence="1 2 3 8">The small GTPases Rab are key regulators of intracellular membrane trafficking, from the formation of transport vesicles to their fusion with membranes. Rabs cycle between an inactive GDP-bound form and an active GTP-bound form that is able to recruit to membranes different set of downstream effectors directly responsible for vesicle formation, movement, tethering and fusion (PubMed:9880326). The small Rab GTPase RAB11A regulates endocytic recycling. Forms a functional Rab11/RAB11FIP3/dynein complex that regulates the movement of peripheral sorting endosomes (SE) along microtubule tracks toward the microtubule organizing center/centrosome, generating the endosomal recycling compartment (ERC). Acts as a major regulator of membrane delivery during cytokinesis. Together with MYO5B and RAB8A participates in epithelial cell polarization. Together with Rabin8/RAB3IP, RAB8A, the exocyst complex, PARD3, PRKCI, ANXA2, CDC42 and DNMBP promotes transcytosis of PODXL to the apical membrane initiation sites (AMIS), apical surface formation and lumenogenesis. Together with MYO5B participates in CFTR trafficking to the plasma membrane and TF (Transferrin) recycling in nonpolarized cells. Required in a complex with MYO5B and RAB11FIP2 for the transport of NPC1L1 to the plasma membrane. Participates in the sorting and basolateral transport of CDH1 from the Golgi apparatus to the plasma membrane (By similarity). Regulates the recycling of FCGRT (receptor of Fc region of monomeric IgG) to basolateral membranes (By similarity). May also play a role in melanosome transport and release from melanocytes (By similarity). Promotes Rabin8/RAB3IP preciliary vesicular trafficking to mother centriole by forming a ciliary targeting complex containing Rab11, ASAP1, Rabin8/RAB3IP, RAB11FIP3 and ARF4, thereby regulating ciliogenesis initiation. On the contrary, upon LPAR1 receptor signaling pathway activation, interaction with phosphorylated WDR44 prevents Rab11-RAB3IP-RAB11FIP3 complex formation and cilia growth. Participates in the export of a subset of neosynthesized proteins through a Rab8-Rab10-Rab11-endososomal dependent export route via interaction with WDR44 (By similarity).</text>
</comment>
<comment type="catalytic activity">
    <reaction evidence="8">
        <text>GTP + H2O = GDP + phosphate + H(+)</text>
        <dbReference type="Rhea" id="RHEA:19669"/>
        <dbReference type="ChEBI" id="CHEBI:15377"/>
        <dbReference type="ChEBI" id="CHEBI:15378"/>
        <dbReference type="ChEBI" id="CHEBI:37565"/>
        <dbReference type="ChEBI" id="CHEBI:43474"/>
        <dbReference type="ChEBI" id="CHEBI:58189"/>
        <dbReference type="EC" id="3.6.5.2"/>
    </reaction>
    <physiologicalReaction direction="left-to-right" evidence="10">
        <dbReference type="Rhea" id="RHEA:19670"/>
    </physiologicalReaction>
</comment>
<comment type="cofactor">
    <cofactor evidence="2">
        <name>Mg(2+)</name>
        <dbReference type="ChEBI" id="CHEBI:18420"/>
    </cofactor>
</comment>
<comment type="activity regulation">
    <text evidence="9">Regulated by guanine nucleotide exchange factors (GEFs) which promote the exchange of bound GDP for free GTP. Regulated by GTPase activating proteins (GAPs) which increase the GTP hydrolysis activity. Inhibited by GDP dissociation inhibitors (GDIs) which prevent Rab-GDP dissociation.</text>
</comment>
<comment type="subunit">
    <text evidence="2 3 4">Interacts (GTP-bound form) with RAB11FIPs (via their C-termini) including RAB11FIP1, RAB11FIP2, RAB11FIP3, RAB11FIP4 and RAB11FIP5 effectors (By similarity). Forms a complex with RAB11FIP3 and dynein intermediate chain DYNC1LI1; the interaction between RAB11A1 and RAB11FIP3 is direct; the complex regulates endocytic trafficking (By similarity). Interacts with EVI5; EVI5 and RAB11FIP3 may be mutually exclusive and compete for binding RAB11A (By similarity). Interacts with SGSM1, SGSM2, SGSM3 and VIPAS39 (By similarity). Interacts with EXOC6 in a GTP-dependent manner. Interacts with RAB11FIP5. Interacts with STXBP6. Interacts (GDP-bound form) with ZFYVE27 (By similarity). Interacts with BIRC6/bruce (By similarity). May interact with TBC1D14 (By similarity). Interacts with UNC119; in a cell cycle-dependent manner (By similarity). GDP-bound and nucleotide-free forms interact with SH3BP5 (By similarity). Interacts (GDP-bound form) with KIF5A in a ZFYVE27-dependent manner (By similarity). Interacts (GDP-bound form) with RELCH (By similarity). Found in a complex composed of RELCH, OSBP1 and RAB11A (By similarity). Interacts with TBC1D12 (By similarity). Interacts with DEF6 (By similarity). Interacts with ATP9A (By similarity). Forms a heterotetramer with RAB11FIP3; the GTP-bound form is preferred for binding. Forms a complex with Rabin8/RAB3IP and RAB11FIP3, probably a heterohexamer with two of each protein subunit, where Rabin8/RAB3IP and RAB11FIP3 simultaneously bind to RAB11A; the complex promotes preciliary trafficking and cilia growth. Forms a complex containing RAB11A, ASAP1, Rabin8/RAB3IP, RAP11FIP3 and ARF4; the complex promotes preciliary trafficking; the complex binds to RHO in photoreceptor cells and promotes RHO ciliary transport. Interacts (GTP-bound form) with WDR44; the interaction prevents RAB11A-RAB3IP-RAB11FIP3 complex formation (By similarity).</text>
</comment>
<comment type="subcellular location">
    <subcellularLocation>
        <location evidence="2">Cell membrane</location>
        <topology evidence="4">Lipid-anchor</topology>
    </subcellularLocation>
    <subcellularLocation>
        <location evidence="2">Endosome membrane</location>
    </subcellularLocation>
    <subcellularLocation>
        <location evidence="2">Recycling endosome membrane</location>
        <topology evidence="4">Lipid-anchor</topology>
    </subcellularLocation>
    <subcellularLocation>
        <location evidence="2">Cleavage furrow</location>
    </subcellularLocation>
    <subcellularLocation>
        <location evidence="2">Cytoplasmic vesicle</location>
        <location evidence="2">Phagosome</location>
    </subcellularLocation>
    <subcellularLocation>
        <location evidence="2">Cytoplasmic vesicle membrane</location>
    </subcellularLocation>
    <subcellularLocation>
        <location evidence="2">Golgi apparatus</location>
    </subcellularLocation>
    <subcellularLocation>
        <location evidence="2">Golgi apparatus</location>
        <location evidence="2">trans-Golgi network</location>
    </subcellularLocation>
    <subcellularLocation>
        <location evidence="2">Cytoplasmic vesicle</location>
    </subcellularLocation>
    <text evidence="2">Localized to WDR44-positive endosomes and tubules. Translocates with RAB11FIP2 from the vesicles of the endocytic recycling compartment (ERC) to the plasma membrane. Localizes to the cleavage furrow. During interphase, localized in vesicles continuously moving from peripheral sorting endosomes towards the pericentrosomal ERC. Colocalizes with PARD3, PRKCI, EXOC5, OCLN, PODXL and RAB8A in apical membrane initiation sites (AMIS) during the generation of apical surface and lumenogenesis. Localized to rhodopsin transport carriers when interacting with RAB11AFIP3 and ASAP1 in photoreceptors. Colocalizes with RAB11AFIP1 on punctate vesicles.</text>
</comment>
<comment type="tissue specificity">
    <text evidence="7">A prominent expression is seen in gastric parietal cells.</text>
</comment>
<comment type="domain">
    <text evidence="2">Switch 1, switch 2 and the interswitch regions are characteristic of Rab GTPases and mediate the interactions with Rab downstream effectors. The switch regions undergo conformational changes upon nucleotide binding which drives interaction with specific sets of effector proteins, with most effectors only binding to GTP-bound Rab.</text>
</comment>
<comment type="similarity">
    <text evidence="9">Belongs to the small GTPase superfamily. Rab family.</text>
</comment>
<accession>P62493</accession>
<accession>P24410</accession>
<accession>Q9JLX1</accession>
<sequence length="216" mass="24394">MGTRDDEYDYLFKVVLIGDSGVGKSNLLSRFTRNEFNLESKSTIGVEFATRSIQVDGKTIKAQIWDTAGQERYRAITSAYYRGAVGALLVYDIAKHLTYENVERWLKELRDHADSNIVIMLVGNKSDLRHLRAVPTDEARAFAEKNGLSFIETSALDSTNVEAAFQTILTEIYRIVSQKQMSDRRENDMSPSNNVVPIHVPPTTENKPKVQCCQNI</sequence>
<evidence type="ECO:0000250" key="1">
    <source>
        <dbReference type="UniProtKB" id="P62490"/>
    </source>
</evidence>
<evidence type="ECO:0000250" key="2">
    <source>
        <dbReference type="UniProtKB" id="P62491"/>
    </source>
</evidence>
<evidence type="ECO:0000250" key="3">
    <source>
        <dbReference type="UniProtKB" id="P62492"/>
    </source>
</evidence>
<evidence type="ECO:0000250" key="4">
    <source>
        <dbReference type="UniProtKB" id="P62494"/>
    </source>
</evidence>
<evidence type="ECO:0000255" key="5"/>
<evidence type="ECO:0000256" key="6">
    <source>
        <dbReference type="SAM" id="MobiDB-lite"/>
    </source>
</evidence>
<evidence type="ECO:0000269" key="7">
    <source>
    </source>
</evidence>
<evidence type="ECO:0000269" key="8">
    <source>
    </source>
</evidence>
<evidence type="ECO:0000305" key="9"/>
<evidence type="ECO:0000305" key="10">
    <source>
    </source>
</evidence>
<dbReference type="EC" id="3.6.5.2" evidence="8"/>
<dbReference type="EMBL" id="L19260">
    <property type="protein sequence ID" value="AAA31491.1"/>
    <property type="molecule type" value="mRNA"/>
</dbReference>
<dbReference type="RefSeq" id="NP_001075720.1">
    <property type="nucleotide sequence ID" value="NM_001082251.2"/>
</dbReference>
<dbReference type="SMR" id="P62493"/>
<dbReference type="FunCoup" id="P62493">
    <property type="interactions" value="2220"/>
</dbReference>
<dbReference type="IntAct" id="P62493">
    <property type="interactions" value="2"/>
</dbReference>
<dbReference type="MINT" id="P62493"/>
<dbReference type="STRING" id="9986.ENSOCUP00000027452"/>
<dbReference type="PaxDb" id="9986-ENSOCUP00000012687"/>
<dbReference type="Ensembl" id="ENSOCUT00000037860.1">
    <property type="protein sequence ID" value="ENSOCUP00000037922.1"/>
    <property type="gene ID" value="ENSOCUG00000014755.4"/>
</dbReference>
<dbReference type="GeneID" id="100009072"/>
<dbReference type="KEGG" id="ocu:100009072"/>
<dbReference type="CTD" id="8766"/>
<dbReference type="eggNOG" id="KOG0087">
    <property type="taxonomic scope" value="Eukaryota"/>
</dbReference>
<dbReference type="GeneTree" id="ENSGT00940000154914"/>
<dbReference type="HOGENOM" id="CLU_041217_23_0_1"/>
<dbReference type="InParanoid" id="P62493"/>
<dbReference type="OMA" id="ITAIYQM"/>
<dbReference type="OrthoDB" id="9989112at2759"/>
<dbReference type="TreeFam" id="TF300099"/>
<dbReference type="PRO" id="PR:P62493"/>
<dbReference type="Proteomes" id="UP000001811">
    <property type="component" value="Chromosome 17"/>
</dbReference>
<dbReference type="Bgee" id="ENSOCUG00000014755">
    <property type="expression patterns" value="Expressed in autopod skin and 15 other cell types or tissues"/>
</dbReference>
<dbReference type="GO" id="GO:0005813">
    <property type="term" value="C:centrosome"/>
    <property type="evidence" value="ECO:0000250"/>
    <property type="project" value="UniProtKB"/>
</dbReference>
<dbReference type="GO" id="GO:0032154">
    <property type="term" value="C:cleavage furrow"/>
    <property type="evidence" value="ECO:0000250"/>
    <property type="project" value="UniProtKB"/>
</dbReference>
<dbReference type="GO" id="GO:0030666">
    <property type="term" value="C:endocytic vesicle membrane"/>
    <property type="evidence" value="ECO:0000250"/>
    <property type="project" value="UniProtKB"/>
</dbReference>
<dbReference type="GO" id="GO:0000139">
    <property type="term" value="C:Golgi membrane"/>
    <property type="evidence" value="ECO:0000250"/>
    <property type="project" value="UniProtKB"/>
</dbReference>
<dbReference type="GO" id="GO:0045335">
    <property type="term" value="C:phagocytic vesicle"/>
    <property type="evidence" value="ECO:0000250"/>
    <property type="project" value="UniProtKB"/>
</dbReference>
<dbReference type="GO" id="GO:0055037">
    <property type="term" value="C:recycling endosome"/>
    <property type="evidence" value="ECO:0000250"/>
    <property type="project" value="UniProtKB"/>
</dbReference>
<dbReference type="GO" id="GO:0055038">
    <property type="term" value="C:recycling endosome membrane"/>
    <property type="evidence" value="ECO:0007669"/>
    <property type="project" value="UniProtKB-SubCell"/>
</dbReference>
<dbReference type="GO" id="GO:0032588">
    <property type="term" value="C:trans-Golgi network membrane"/>
    <property type="evidence" value="ECO:0000250"/>
    <property type="project" value="UniProtKB"/>
</dbReference>
<dbReference type="GO" id="GO:0051959">
    <property type="term" value="F:dynein light intermediate chain binding"/>
    <property type="evidence" value="ECO:0000250"/>
    <property type="project" value="UniProtKB"/>
</dbReference>
<dbReference type="GO" id="GO:0003925">
    <property type="term" value="F:G protein activity"/>
    <property type="evidence" value="ECO:0007669"/>
    <property type="project" value="UniProtKB-EC"/>
</dbReference>
<dbReference type="GO" id="GO:0005525">
    <property type="term" value="F:GTP binding"/>
    <property type="evidence" value="ECO:0007669"/>
    <property type="project" value="UniProtKB-KW"/>
</dbReference>
<dbReference type="GO" id="GO:0003924">
    <property type="term" value="F:GTPase activity"/>
    <property type="evidence" value="ECO:0000250"/>
    <property type="project" value="UniProtKB"/>
</dbReference>
<dbReference type="GO" id="GO:0032402">
    <property type="term" value="P:melanosome transport"/>
    <property type="evidence" value="ECO:0000250"/>
    <property type="project" value="UniProtKB"/>
</dbReference>
<dbReference type="GO" id="GO:0031175">
    <property type="term" value="P:neuron projection development"/>
    <property type="evidence" value="ECO:0000250"/>
    <property type="project" value="UniProtKB"/>
</dbReference>
<dbReference type="GO" id="GO:0061512">
    <property type="term" value="P:protein localization to cilium"/>
    <property type="evidence" value="ECO:0000250"/>
    <property type="project" value="UniProtKB"/>
</dbReference>
<dbReference type="GO" id="GO:0072659">
    <property type="term" value="P:protein localization to plasma membrane"/>
    <property type="evidence" value="ECO:0000250"/>
    <property type="project" value="UniProtKB"/>
</dbReference>
<dbReference type="GO" id="GO:0015031">
    <property type="term" value="P:protein transport"/>
    <property type="evidence" value="ECO:0007669"/>
    <property type="project" value="UniProtKB-KW"/>
</dbReference>
<dbReference type="GO" id="GO:1902017">
    <property type="term" value="P:regulation of cilium assembly"/>
    <property type="evidence" value="ECO:0000250"/>
    <property type="project" value="UniProtKB"/>
</dbReference>
<dbReference type="GO" id="GO:1902954">
    <property type="term" value="P:regulation of early endosome to recycling endosome transport"/>
    <property type="evidence" value="ECO:0000250"/>
    <property type="project" value="UniProtKB"/>
</dbReference>
<dbReference type="GO" id="GO:2001135">
    <property type="term" value="P:regulation of endocytic recycling"/>
    <property type="evidence" value="ECO:0000250"/>
    <property type="project" value="UniProtKB"/>
</dbReference>
<dbReference type="GO" id="GO:1904779">
    <property type="term" value="P:regulation of protein localization to centrosome"/>
    <property type="evidence" value="ECO:0000250"/>
    <property type="project" value="UniProtKB"/>
</dbReference>
<dbReference type="CDD" id="cd01868">
    <property type="entry name" value="Rab11_like"/>
    <property type="match status" value="1"/>
</dbReference>
<dbReference type="FunFam" id="3.40.50.300:FF:000085">
    <property type="entry name" value="Putative ras-related protein rab-11a"/>
    <property type="match status" value="1"/>
</dbReference>
<dbReference type="Gene3D" id="3.40.50.300">
    <property type="entry name" value="P-loop containing nucleotide triphosphate hydrolases"/>
    <property type="match status" value="1"/>
</dbReference>
<dbReference type="InterPro" id="IPR027417">
    <property type="entry name" value="P-loop_NTPase"/>
</dbReference>
<dbReference type="InterPro" id="IPR050209">
    <property type="entry name" value="Rab_GTPases_membrane_traffic"/>
</dbReference>
<dbReference type="InterPro" id="IPR005225">
    <property type="entry name" value="Small_GTP-bd"/>
</dbReference>
<dbReference type="InterPro" id="IPR001806">
    <property type="entry name" value="Small_GTPase"/>
</dbReference>
<dbReference type="NCBIfam" id="TIGR00231">
    <property type="entry name" value="small_GTP"/>
    <property type="match status" value="1"/>
</dbReference>
<dbReference type="PANTHER" id="PTHR47979">
    <property type="entry name" value="DRAB11-RELATED"/>
    <property type="match status" value="1"/>
</dbReference>
<dbReference type="Pfam" id="PF00071">
    <property type="entry name" value="Ras"/>
    <property type="match status" value="1"/>
</dbReference>
<dbReference type="PRINTS" id="PR00449">
    <property type="entry name" value="RASTRNSFRMNG"/>
</dbReference>
<dbReference type="SMART" id="SM00175">
    <property type="entry name" value="RAB"/>
    <property type="match status" value="1"/>
</dbReference>
<dbReference type="SMART" id="SM00176">
    <property type="entry name" value="RAN"/>
    <property type="match status" value="1"/>
</dbReference>
<dbReference type="SMART" id="SM00173">
    <property type="entry name" value="RAS"/>
    <property type="match status" value="1"/>
</dbReference>
<dbReference type="SMART" id="SM00174">
    <property type="entry name" value="RHO"/>
    <property type="match status" value="1"/>
</dbReference>
<dbReference type="SUPFAM" id="SSF52540">
    <property type="entry name" value="P-loop containing nucleoside triphosphate hydrolases"/>
    <property type="match status" value="1"/>
</dbReference>
<dbReference type="PROSITE" id="PS51419">
    <property type="entry name" value="RAB"/>
    <property type="match status" value="1"/>
</dbReference>
<feature type="initiator methionine" description="Removed" evidence="2">
    <location>
        <position position="1"/>
    </location>
</feature>
<feature type="chain" id="PRO_0000121155" description="Ras-related protein Rab-11A">
    <location>
        <begin position="2"/>
        <end position="213"/>
    </location>
</feature>
<feature type="propeptide" id="PRO_0000370811" description="Removed in mature form" evidence="5">
    <location>
        <begin position="214"/>
        <end position="216"/>
    </location>
</feature>
<feature type="region of interest" description="Disordered" evidence="6">
    <location>
        <begin position="183"/>
        <end position="211"/>
    </location>
</feature>
<feature type="short sequence motif" description="Switch 1" evidence="2">
    <location>
        <begin position="36"/>
        <end position="47"/>
    </location>
</feature>
<feature type="short sequence motif" description="Switch 2" evidence="2">
    <location>
        <begin position="67"/>
        <end position="86"/>
    </location>
</feature>
<feature type="binding site" evidence="2">
    <location>
        <position position="20"/>
    </location>
    <ligand>
        <name>GTP</name>
        <dbReference type="ChEBI" id="CHEBI:37565"/>
    </ligand>
</feature>
<feature type="binding site" evidence="2">
    <location>
        <position position="21"/>
    </location>
    <ligand>
        <name>GTP</name>
        <dbReference type="ChEBI" id="CHEBI:37565"/>
    </ligand>
</feature>
<feature type="binding site" evidence="2">
    <location>
        <position position="22"/>
    </location>
    <ligand>
        <name>GTP</name>
        <dbReference type="ChEBI" id="CHEBI:37565"/>
    </ligand>
</feature>
<feature type="binding site" evidence="2">
    <location>
        <position position="23"/>
    </location>
    <ligand>
        <name>GTP</name>
        <dbReference type="ChEBI" id="CHEBI:37565"/>
    </ligand>
</feature>
<feature type="binding site" evidence="2">
    <location>
        <position position="24"/>
    </location>
    <ligand>
        <name>GTP</name>
        <dbReference type="ChEBI" id="CHEBI:37565"/>
    </ligand>
</feature>
<feature type="binding site" evidence="2">
    <location>
        <position position="25"/>
    </location>
    <ligand>
        <name>GTP</name>
        <dbReference type="ChEBI" id="CHEBI:37565"/>
    </ligand>
</feature>
<feature type="binding site" evidence="2">
    <location>
        <position position="25"/>
    </location>
    <ligand>
        <name>Mg(2+)</name>
        <dbReference type="ChEBI" id="CHEBI:18420"/>
    </ligand>
</feature>
<feature type="binding site" evidence="2">
    <location>
        <position position="26"/>
    </location>
    <ligand>
        <name>GTP</name>
        <dbReference type="ChEBI" id="CHEBI:37565"/>
    </ligand>
</feature>
<feature type="binding site" evidence="2">
    <location>
        <position position="37"/>
    </location>
    <ligand>
        <name>GTP</name>
        <dbReference type="ChEBI" id="CHEBI:37565"/>
    </ligand>
</feature>
<feature type="binding site" evidence="2">
    <location>
        <position position="38"/>
    </location>
    <ligand>
        <name>GTP</name>
        <dbReference type="ChEBI" id="CHEBI:37565"/>
    </ligand>
</feature>
<feature type="binding site" evidence="2">
    <location>
        <position position="40"/>
    </location>
    <ligand>
        <name>GTP</name>
        <dbReference type="ChEBI" id="CHEBI:37565"/>
    </ligand>
</feature>
<feature type="binding site" evidence="2">
    <location>
        <position position="42"/>
    </location>
    <ligand>
        <name>GTP</name>
        <dbReference type="ChEBI" id="CHEBI:37565"/>
    </ligand>
</feature>
<feature type="binding site" evidence="2">
    <location>
        <position position="43"/>
    </location>
    <ligand>
        <name>GTP</name>
        <dbReference type="ChEBI" id="CHEBI:37565"/>
    </ligand>
</feature>
<feature type="binding site" evidence="2">
    <location>
        <position position="43"/>
    </location>
    <ligand>
        <name>Mg(2+)</name>
        <dbReference type="ChEBI" id="CHEBI:18420"/>
    </ligand>
</feature>
<feature type="binding site" evidence="2">
    <location>
        <position position="66"/>
    </location>
    <ligand>
        <name>Mg(2+)</name>
        <dbReference type="ChEBI" id="CHEBI:18420"/>
    </ligand>
</feature>
<feature type="binding site" evidence="2">
    <location>
        <position position="69"/>
    </location>
    <ligand>
        <name>GTP</name>
        <dbReference type="ChEBI" id="CHEBI:37565"/>
    </ligand>
</feature>
<feature type="binding site" evidence="2">
    <location>
        <position position="124"/>
    </location>
    <ligand>
        <name>GTP</name>
        <dbReference type="ChEBI" id="CHEBI:37565"/>
    </ligand>
</feature>
<feature type="binding site" evidence="2">
    <location>
        <position position="125"/>
    </location>
    <ligand>
        <name>GTP</name>
        <dbReference type="ChEBI" id="CHEBI:37565"/>
    </ligand>
</feature>
<feature type="binding site" evidence="2">
    <location>
        <position position="127"/>
    </location>
    <ligand>
        <name>GTP</name>
        <dbReference type="ChEBI" id="CHEBI:37565"/>
    </ligand>
</feature>
<feature type="binding site" evidence="2">
    <location>
        <position position="155"/>
    </location>
    <ligand>
        <name>GTP</name>
        <dbReference type="ChEBI" id="CHEBI:37565"/>
    </ligand>
</feature>
<feature type="binding site" evidence="2">
    <location>
        <position position="156"/>
    </location>
    <ligand>
        <name>GTP</name>
        <dbReference type="ChEBI" id="CHEBI:37565"/>
    </ligand>
</feature>
<feature type="modified residue" description="N-acetylglycine" evidence="2">
    <location>
        <position position="2"/>
    </location>
</feature>
<feature type="modified residue" description="Cysteine methyl ester" evidence="5">
    <location>
        <position position="213"/>
    </location>
</feature>
<feature type="lipid moiety-binding region" description="S-geranylgeranyl cysteine" evidence="2">
    <location>
        <position position="212"/>
    </location>
</feature>
<feature type="lipid moiety-binding region" description="S-geranylgeranyl cysteine" evidence="2">
    <location>
        <position position="213"/>
    </location>
</feature>
<protein>
    <recommendedName>
        <fullName evidence="3">Ras-related protein Rab-11A</fullName>
        <shortName evidence="3">Rab-11</shortName>
        <ecNumber evidence="8">3.6.5.2</ecNumber>
    </recommendedName>
</protein>
<keyword id="KW-0007">Acetylation</keyword>
<keyword id="KW-0131">Cell cycle</keyword>
<keyword id="KW-1003">Cell membrane</keyword>
<keyword id="KW-0968">Cytoplasmic vesicle</keyword>
<keyword id="KW-0967">Endosome</keyword>
<keyword id="KW-0333">Golgi apparatus</keyword>
<keyword id="KW-0342">GTP-binding</keyword>
<keyword id="KW-0378">Hydrolase</keyword>
<keyword id="KW-0449">Lipoprotein</keyword>
<keyword id="KW-0460">Magnesium</keyword>
<keyword id="KW-0472">Membrane</keyword>
<keyword id="KW-0479">Metal-binding</keyword>
<keyword id="KW-0488">Methylation</keyword>
<keyword id="KW-0547">Nucleotide-binding</keyword>
<keyword id="KW-0636">Prenylation</keyword>
<keyword id="KW-0653">Protein transport</keyword>
<keyword id="KW-1185">Reference proteome</keyword>
<keyword id="KW-0813">Transport</keyword>
<proteinExistence type="evidence at protein level"/>
<organism>
    <name type="scientific">Oryctolagus cuniculus</name>
    <name type="common">Rabbit</name>
    <dbReference type="NCBI Taxonomy" id="9986"/>
    <lineage>
        <taxon>Eukaryota</taxon>
        <taxon>Metazoa</taxon>
        <taxon>Chordata</taxon>
        <taxon>Craniata</taxon>
        <taxon>Vertebrata</taxon>
        <taxon>Euteleostomi</taxon>
        <taxon>Mammalia</taxon>
        <taxon>Eutheria</taxon>
        <taxon>Euarchontoglires</taxon>
        <taxon>Glires</taxon>
        <taxon>Lagomorpha</taxon>
        <taxon>Leporidae</taxon>
        <taxon>Oryctolagus</taxon>
    </lineage>
</organism>
<gene>
    <name evidence="3" type="primary">RAB11A</name>
    <name evidence="3" type="synonym">RAB11</name>
</gene>